<reference key="1">
    <citation type="submission" date="2009-03" db="EMBL/GenBank/DDBJ databases">
        <title>Comparison of the complete genome sequences of Rhodococcus erythropolis PR4 and Rhodococcus opacus B4.</title>
        <authorList>
            <person name="Takarada H."/>
            <person name="Sekine M."/>
            <person name="Hosoyama A."/>
            <person name="Yamada R."/>
            <person name="Fujisawa T."/>
            <person name="Omata S."/>
            <person name="Shimizu A."/>
            <person name="Tsukatani N."/>
            <person name="Tanikawa S."/>
            <person name="Fujita N."/>
            <person name="Harayama S."/>
        </authorList>
    </citation>
    <scope>NUCLEOTIDE SEQUENCE [LARGE SCALE GENOMIC DNA]</scope>
    <source>
        <strain>B4</strain>
    </source>
</reference>
<comment type="function">
    <text evidence="1">An accessory protein needed during the final step in the assembly of 30S ribosomal subunit, possibly for assembly of the head region. Essential for efficient processing of 16S rRNA. May be needed both before and after RbfA during the maturation of 16S rRNA. It has affinity for free ribosomal 30S subunits but not for 70S ribosomes.</text>
</comment>
<comment type="subunit">
    <text evidence="1">Binds ribosomal protein uS19.</text>
</comment>
<comment type="subcellular location">
    <subcellularLocation>
        <location evidence="1">Cytoplasm</location>
    </subcellularLocation>
</comment>
<comment type="domain">
    <text evidence="1">The PRC barrel domain binds ribosomal protein uS19.</text>
</comment>
<comment type="similarity">
    <text evidence="1">Belongs to the RimM family.</text>
</comment>
<sequence>MELVVGRVAKSHGIKGEIVVEVRTDEPEDRFAVGAVLRGHKPREQTVNTYRVEAAREHSGRLLLRLEGVPDRTAADALRGTLFVIDSAELVPSDDPDEFYDHELEGLSVRLADGTELGAVIEVLHSAAGELLSIRRAGEQSGELLVPFVAAIVTSVSVADGVVVIDPPEGLLDPDFGESADGK</sequence>
<protein>
    <recommendedName>
        <fullName evidence="1">Ribosome maturation factor RimM</fullName>
    </recommendedName>
</protein>
<keyword id="KW-0143">Chaperone</keyword>
<keyword id="KW-0963">Cytoplasm</keyword>
<keyword id="KW-0690">Ribosome biogenesis</keyword>
<keyword id="KW-0698">rRNA processing</keyword>
<organism>
    <name type="scientific">Rhodococcus opacus (strain B4)</name>
    <dbReference type="NCBI Taxonomy" id="632772"/>
    <lineage>
        <taxon>Bacteria</taxon>
        <taxon>Bacillati</taxon>
        <taxon>Actinomycetota</taxon>
        <taxon>Actinomycetes</taxon>
        <taxon>Mycobacteriales</taxon>
        <taxon>Nocardiaceae</taxon>
        <taxon>Rhodococcus</taxon>
    </lineage>
</organism>
<name>RIMM_RHOOB</name>
<accession>C1B2R9</accession>
<proteinExistence type="inferred from homology"/>
<feature type="chain" id="PRO_1000196568" description="Ribosome maturation factor RimM">
    <location>
        <begin position="1"/>
        <end position="183"/>
    </location>
</feature>
<feature type="domain" description="PRC barrel" evidence="1">
    <location>
        <begin position="95"/>
        <end position="171"/>
    </location>
</feature>
<evidence type="ECO:0000255" key="1">
    <source>
        <dbReference type="HAMAP-Rule" id="MF_00014"/>
    </source>
</evidence>
<gene>
    <name evidence="1" type="primary">rimM</name>
    <name type="ordered locus">ROP_65890</name>
</gene>
<dbReference type="EMBL" id="AP011115">
    <property type="protein sequence ID" value="BAH54836.1"/>
    <property type="molecule type" value="Genomic_DNA"/>
</dbReference>
<dbReference type="RefSeq" id="WP_015890278.1">
    <property type="nucleotide sequence ID" value="NC_012522.1"/>
</dbReference>
<dbReference type="SMR" id="C1B2R9"/>
<dbReference type="STRING" id="632772.ROP_65890"/>
<dbReference type="KEGG" id="rop:ROP_65890"/>
<dbReference type="PATRIC" id="fig|632772.20.peg.6875"/>
<dbReference type="HOGENOM" id="CLU_077636_0_0_11"/>
<dbReference type="OrthoDB" id="5381335at2"/>
<dbReference type="Proteomes" id="UP000002212">
    <property type="component" value="Chromosome"/>
</dbReference>
<dbReference type="GO" id="GO:0005737">
    <property type="term" value="C:cytoplasm"/>
    <property type="evidence" value="ECO:0007669"/>
    <property type="project" value="UniProtKB-SubCell"/>
</dbReference>
<dbReference type="GO" id="GO:0005840">
    <property type="term" value="C:ribosome"/>
    <property type="evidence" value="ECO:0007669"/>
    <property type="project" value="InterPro"/>
</dbReference>
<dbReference type="GO" id="GO:0043022">
    <property type="term" value="F:ribosome binding"/>
    <property type="evidence" value="ECO:0007669"/>
    <property type="project" value="InterPro"/>
</dbReference>
<dbReference type="GO" id="GO:0042274">
    <property type="term" value="P:ribosomal small subunit biogenesis"/>
    <property type="evidence" value="ECO:0007669"/>
    <property type="project" value="UniProtKB-UniRule"/>
</dbReference>
<dbReference type="GO" id="GO:0006364">
    <property type="term" value="P:rRNA processing"/>
    <property type="evidence" value="ECO:0007669"/>
    <property type="project" value="UniProtKB-UniRule"/>
</dbReference>
<dbReference type="Gene3D" id="2.30.30.240">
    <property type="entry name" value="PRC-barrel domain"/>
    <property type="match status" value="1"/>
</dbReference>
<dbReference type="Gene3D" id="2.40.30.60">
    <property type="entry name" value="RimM"/>
    <property type="match status" value="1"/>
</dbReference>
<dbReference type="HAMAP" id="MF_00014">
    <property type="entry name" value="Ribosome_mat_RimM"/>
    <property type="match status" value="1"/>
</dbReference>
<dbReference type="InterPro" id="IPR011033">
    <property type="entry name" value="PRC_barrel-like_sf"/>
</dbReference>
<dbReference type="InterPro" id="IPR056792">
    <property type="entry name" value="PRC_RimM"/>
</dbReference>
<dbReference type="InterPro" id="IPR011961">
    <property type="entry name" value="RimM"/>
</dbReference>
<dbReference type="InterPro" id="IPR002676">
    <property type="entry name" value="RimM_N"/>
</dbReference>
<dbReference type="InterPro" id="IPR036976">
    <property type="entry name" value="RimM_N_sf"/>
</dbReference>
<dbReference type="InterPro" id="IPR009000">
    <property type="entry name" value="Transl_B-barrel_sf"/>
</dbReference>
<dbReference type="NCBIfam" id="TIGR02273">
    <property type="entry name" value="16S_RimM"/>
    <property type="match status" value="1"/>
</dbReference>
<dbReference type="PANTHER" id="PTHR33692">
    <property type="entry name" value="RIBOSOME MATURATION FACTOR RIMM"/>
    <property type="match status" value="1"/>
</dbReference>
<dbReference type="PANTHER" id="PTHR33692:SF1">
    <property type="entry name" value="RIBOSOME MATURATION FACTOR RIMM"/>
    <property type="match status" value="1"/>
</dbReference>
<dbReference type="Pfam" id="PF24986">
    <property type="entry name" value="PRC_RimM"/>
    <property type="match status" value="1"/>
</dbReference>
<dbReference type="Pfam" id="PF01782">
    <property type="entry name" value="RimM"/>
    <property type="match status" value="1"/>
</dbReference>
<dbReference type="SUPFAM" id="SSF50346">
    <property type="entry name" value="PRC-barrel domain"/>
    <property type="match status" value="1"/>
</dbReference>
<dbReference type="SUPFAM" id="SSF50447">
    <property type="entry name" value="Translation proteins"/>
    <property type="match status" value="1"/>
</dbReference>